<feature type="chain" id="PRO_0000183326" description="Cytochrome c oxidase subunit 1">
    <location>
        <begin position="1"/>
        <end position="337" status="greater than"/>
    </location>
</feature>
<feature type="topological domain" description="Mitochondrial matrix" evidence="2">
    <location>
        <begin position="1"/>
        <end position="12"/>
    </location>
</feature>
<feature type="transmembrane region" description="Helical; Name=I" evidence="2">
    <location>
        <begin position="13"/>
        <end position="41"/>
    </location>
</feature>
<feature type="topological domain" description="Mitochondrial intermembrane" evidence="2">
    <location>
        <begin position="42"/>
        <end position="51"/>
    </location>
</feature>
<feature type="transmembrane region" description="Helical; Name=II" evidence="2">
    <location>
        <begin position="52"/>
        <end position="87"/>
    </location>
</feature>
<feature type="topological domain" description="Mitochondrial matrix" evidence="2">
    <location>
        <begin position="88"/>
        <end position="95"/>
    </location>
</feature>
<feature type="transmembrane region" description="Helical; Name=III" evidence="2">
    <location>
        <begin position="96"/>
        <end position="118"/>
    </location>
</feature>
<feature type="topological domain" description="Mitochondrial intermembrane" evidence="2">
    <location>
        <begin position="119"/>
        <end position="141"/>
    </location>
</feature>
<feature type="transmembrane region" description="Helical; Name=IV" evidence="2">
    <location>
        <begin position="142"/>
        <end position="171"/>
    </location>
</feature>
<feature type="topological domain" description="Mitochondrial matrix" evidence="2">
    <location>
        <begin position="172"/>
        <end position="183"/>
    </location>
</feature>
<feature type="transmembrane region" description="Helical; Name=V" evidence="2">
    <location>
        <begin position="184"/>
        <end position="213"/>
    </location>
</feature>
<feature type="topological domain" description="Mitochondrial intermembrane" evidence="2">
    <location>
        <begin position="214"/>
        <end position="228"/>
    </location>
</feature>
<feature type="transmembrane region" description="Helical; Name=VI" evidence="2">
    <location>
        <begin position="229"/>
        <end position="262"/>
    </location>
</feature>
<feature type="topological domain" description="Mitochondrial matrix" evidence="2">
    <location>
        <begin position="263"/>
        <end position="270"/>
    </location>
</feature>
<feature type="transmembrane region" description="Helical; Name=VII" evidence="2">
    <location>
        <begin position="271"/>
        <end position="287"/>
    </location>
</feature>
<feature type="topological domain" description="Mitochondrial intermembrane" evidence="2">
    <location>
        <begin position="288"/>
        <end position="299"/>
    </location>
</feature>
<feature type="transmembrane region" description="Helical; Name=VIII" evidence="2">
    <location>
        <begin position="300"/>
        <end position="328"/>
    </location>
</feature>
<feature type="topological domain" description="Mitochondrial matrix" evidence="2">
    <location>
        <begin position="329"/>
        <end position="337" status="greater than"/>
    </location>
</feature>
<feature type="binding site" evidence="2">
    <location>
        <position position="41"/>
    </location>
    <ligand>
        <name>Na(+)</name>
        <dbReference type="ChEBI" id="CHEBI:29101"/>
    </ligand>
</feature>
<feature type="binding site" evidence="2">
    <location>
        <position position="46"/>
    </location>
    <ligand>
        <name>Na(+)</name>
        <dbReference type="ChEBI" id="CHEBI:29101"/>
    </ligand>
</feature>
<feature type="binding site" description="axial binding residue" evidence="2">
    <location>
        <position position="62"/>
    </location>
    <ligand>
        <name>Fe(II)-heme a</name>
        <dbReference type="ChEBI" id="CHEBI:61715"/>
        <note>low-spin</note>
    </ligand>
    <ligandPart>
        <name>Fe</name>
        <dbReference type="ChEBI" id="CHEBI:18248"/>
    </ligandPart>
</feature>
<feature type="binding site" evidence="2">
    <location>
        <position position="241"/>
    </location>
    <ligand>
        <name>Cu cation</name>
        <dbReference type="ChEBI" id="CHEBI:23378"/>
        <label>B</label>
    </ligand>
</feature>
<feature type="binding site" evidence="2">
    <location>
        <position position="245"/>
    </location>
    <ligand>
        <name>O2</name>
        <dbReference type="ChEBI" id="CHEBI:15379"/>
    </ligand>
</feature>
<feature type="binding site" evidence="2">
    <location>
        <position position="291"/>
    </location>
    <ligand>
        <name>Cu cation</name>
        <dbReference type="ChEBI" id="CHEBI:23378"/>
        <label>B</label>
    </ligand>
</feature>
<feature type="binding site" evidence="2">
    <location>
        <position position="292"/>
    </location>
    <ligand>
        <name>Cu cation</name>
        <dbReference type="ChEBI" id="CHEBI:23378"/>
        <label>B</label>
    </ligand>
</feature>
<feature type="cross-link" description="1'-histidyl-3'-tyrosine (His-Tyr)" evidence="2">
    <location>
        <begin position="241"/>
        <end position="245"/>
    </location>
</feature>
<feature type="non-terminal residue">
    <location>
        <position position="337"/>
    </location>
</feature>
<evidence type="ECO:0000250" key="1">
    <source>
        <dbReference type="UniProtKB" id="P00395"/>
    </source>
</evidence>
<evidence type="ECO:0000250" key="2">
    <source>
        <dbReference type="UniProtKB" id="P00396"/>
    </source>
</evidence>
<evidence type="ECO:0000250" key="3">
    <source>
        <dbReference type="UniProtKB" id="P00401"/>
    </source>
</evidence>
<evidence type="ECO:0000305" key="4"/>
<keyword id="KW-0106">Calcium</keyword>
<keyword id="KW-0186">Copper</keyword>
<keyword id="KW-0249">Electron transport</keyword>
<keyword id="KW-0349">Heme</keyword>
<keyword id="KW-0408">Iron</keyword>
<keyword id="KW-0472">Membrane</keyword>
<keyword id="KW-0479">Metal-binding</keyword>
<keyword id="KW-0496">Mitochondrion</keyword>
<keyword id="KW-0999">Mitochondrion inner membrane</keyword>
<keyword id="KW-0679">Respiratory chain</keyword>
<keyword id="KW-0915">Sodium</keyword>
<keyword id="KW-1278">Translocase</keyword>
<keyword id="KW-0812">Transmembrane</keyword>
<keyword id="KW-1133">Transmembrane helix</keyword>
<keyword id="KW-0813">Transport</keyword>
<name>COX1_DRONO</name>
<sequence length="337" mass="36786">MTFITRWFFSTNHKDIGTLYLIFGAWAGMVGTALSLLIRAELGQPGTLLGDDQIYNVVVTAHAFVMIFFMVMPVMIGGFGNWLVPLMIGAPDMAFPRMNNMSFWLLPPSFLLLLASSTVEAGAGTGWTVYPPLAGNLAHAGASVDLAIFSLHLAGVSSILGAINFITTAINMKPPALTQYQTPLFVWSVLITAILLLLSLPVLAAGITMLLTDRNLNTTFFDPAGGGDPVLYQHLFWFFGHPEVYILILPGFGMISHVVTYYAGKKEPFGYMGMVWAMLSIGFLGFIVWAHHMFTVGMDVDTRAYFTSATMIIAIPTGIKVFSWLATLHGGTIKWDP</sequence>
<protein>
    <recommendedName>
        <fullName>Cytochrome c oxidase subunit 1</fullName>
        <ecNumber>7.1.1.9</ecNumber>
    </recommendedName>
    <alternativeName>
        <fullName>Cytochrome c oxidase polypeptide I</fullName>
    </alternativeName>
</protein>
<dbReference type="EC" id="7.1.1.9"/>
<dbReference type="EMBL" id="U76059">
    <property type="protein sequence ID" value="AAB61319.1"/>
    <property type="molecule type" value="Genomic_DNA"/>
</dbReference>
<dbReference type="SMR" id="O03524"/>
<dbReference type="UniPathway" id="UPA00705"/>
<dbReference type="Proteomes" id="UP000694423">
    <property type="component" value="Unplaced"/>
</dbReference>
<dbReference type="GO" id="GO:0005743">
    <property type="term" value="C:mitochondrial inner membrane"/>
    <property type="evidence" value="ECO:0007669"/>
    <property type="project" value="UniProtKB-SubCell"/>
</dbReference>
<dbReference type="GO" id="GO:0045277">
    <property type="term" value="C:respiratory chain complex IV"/>
    <property type="evidence" value="ECO:0000250"/>
    <property type="project" value="UniProtKB"/>
</dbReference>
<dbReference type="GO" id="GO:0004129">
    <property type="term" value="F:cytochrome-c oxidase activity"/>
    <property type="evidence" value="ECO:0007669"/>
    <property type="project" value="UniProtKB-EC"/>
</dbReference>
<dbReference type="GO" id="GO:0020037">
    <property type="term" value="F:heme binding"/>
    <property type="evidence" value="ECO:0007669"/>
    <property type="project" value="InterPro"/>
</dbReference>
<dbReference type="GO" id="GO:0046872">
    <property type="term" value="F:metal ion binding"/>
    <property type="evidence" value="ECO:0007669"/>
    <property type="project" value="UniProtKB-KW"/>
</dbReference>
<dbReference type="GO" id="GO:0015990">
    <property type="term" value="P:electron transport coupled proton transport"/>
    <property type="evidence" value="ECO:0007669"/>
    <property type="project" value="TreeGrafter"/>
</dbReference>
<dbReference type="GO" id="GO:0006123">
    <property type="term" value="P:mitochondrial electron transport, cytochrome c to oxygen"/>
    <property type="evidence" value="ECO:0007669"/>
    <property type="project" value="TreeGrafter"/>
</dbReference>
<dbReference type="FunFam" id="1.20.210.10:FF:000013">
    <property type="entry name" value="Cytochrome c oxidase subunit 1"/>
    <property type="match status" value="1"/>
</dbReference>
<dbReference type="Gene3D" id="1.20.210.10">
    <property type="entry name" value="Cytochrome c oxidase-like, subunit I domain"/>
    <property type="match status" value="1"/>
</dbReference>
<dbReference type="InterPro" id="IPR023616">
    <property type="entry name" value="Cyt_c_oxase-like_su1_dom"/>
</dbReference>
<dbReference type="InterPro" id="IPR036927">
    <property type="entry name" value="Cyt_c_oxase-like_su1_sf"/>
</dbReference>
<dbReference type="InterPro" id="IPR000883">
    <property type="entry name" value="Cyt_C_Oxase_1"/>
</dbReference>
<dbReference type="InterPro" id="IPR023615">
    <property type="entry name" value="Cyt_c_Oxase_su1_BS"/>
</dbReference>
<dbReference type="PANTHER" id="PTHR10422">
    <property type="entry name" value="CYTOCHROME C OXIDASE SUBUNIT 1"/>
    <property type="match status" value="1"/>
</dbReference>
<dbReference type="PANTHER" id="PTHR10422:SF18">
    <property type="entry name" value="CYTOCHROME C OXIDASE SUBUNIT 1"/>
    <property type="match status" value="1"/>
</dbReference>
<dbReference type="Pfam" id="PF00115">
    <property type="entry name" value="COX1"/>
    <property type="match status" value="1"/>
</dbReference>
<dbReference type="PRINTS" id="PR01165">
    <property type="entry name" value="CYCOXIDASEI"/>
</dbReference>
<dbReference type="SUPFAM" id="SSF81442">
    <property type="entry name" value="Cytochrome c oxidase subunit I-like"/>
    <property type="match status" value="1"/>
</dbReference>
<dbReference type="PROSITE" id="PS50855">
    <property type="entry name" value="COX1"/>
    <property type="match status" value="1"/>
</dbReference>
<dbReference type="PROSITE" id="PS00077">
    <property type="entry name" value="COX1_CUB"/>
    <property type="match status" value="1"/>
</dbReference>
<proteinExistence type="inferred from homology"/>
<geneLocation type="mitochondrion"/>
<accession>O03524</accession>
<comment type="function">
    <text evidence="3">Component of the cytochrome c oxidase, the last enzyme in the mitochondrial electron transport chain which drives oxidative phosphorylation. The respiratory chain contains 3 multisubunit complexes succinate dehydrogenase (complex II, CII), ubiquinol-cytochrome c oxidoreductase (cytochrome b-c1 complex, complex III, CIII) and cytochrome c oxidase (complex IV, CIV), that cooperate to transfer electrons derived from NADH and succinate to molecular oxygen, creating an electrochemical gradient over the inner membrane that drives transmembrane transport and the ATP synthase. Cytochrome c oxidase is the component of the respiratory chain that catalyzes the reduction of oxygen to water. Electrons originating from reduced cytochrome c in the intermembrane space (IMS) are transferred via the dinuclear copper A center (CU(A)) of subunit 2 and heme A of subunit 1 to the active site in subunit 1, a binuclear center (BNC) formed by heme A3 and copper B (CU(B)). The BNC reduces molecular oxygen to 2 water molecules using 4 electrons from cytochrome c in the IMS and 4 protons from the mitochondrial matrix.</text>
</comment>
<comment type="catalytic activity">
    <reaction evidence="3">
        <text>4 Fe(II)-[cytochrome c] + O2 + 8 H(+)(in) = 4 Fe(III)-[cytochrome c] + 2 H2O + 4 H(+)(out)</text>
        <dbReference type="Rhea" id="RHEA:11436"/>
        <dbReference type="Rhea" id="RHEA-COMP:10350"/>
        <dbReference type="Rhea" id="RHEA-COMP:14399"/>
        <dbReference type="ChEBI" id="CHEBI:15377"/>
        <dbReference type="ChEBI" id="CHEBI:15378"/>
        <dbReference type="ChEBI" id="CHEBI:15379"/>
        <dbReference type="ChEBI" id="CHEBI:29033"/>
        <dbReference type="ChEBI" id="CHEBI:29034"/>
        <dbReference type="EC" id="7.1.1.9"/>
    </reaction>
    <physiologicalReaction direction="left-to-right" evidence="3">
        <dbReference type="Rhea" id="RHEA:11437"/>
    </physiologicalReaction>
</comment>
<comment type="cofactor">
    <cofactor evidence="2">
        <name>heme</name>
        <dbReference type="ChEBI" id="CHEBI:30413"/>
    </cofactor>
    <text evidence="2">Binds 2 heme A groups non-covalently per subunit.</text>
</comment>
<comment type="cofactor">
    <cofactor evidence="2">
        <name>Cu cation</name>
        <dbReference type="ChEBI" id="CHEBI:23378"/>
    </cofactor>
    <text evidence="2">Binds a copper B center.</text>
</comment>
<comment type="pathway">
    <text evidence="3">Energy metabolism; oxidative phosphorylation.</text>
</comment>
<comment type="subunit">
    <text evidence="1 2">Component of the cytochrome c oxidase (complex IV, CIV), a multisubunit enzyme composed of 14 subunits. The complex is composed of a catalytic core of 3 subunits MT-CO1, MT-CO2 and MT-CO3, encoded in the mitochondrial DNA, and 11 supernumerary subunits COX4I, COX5A, COX5B, COX6A, COX6B, COX6C, COX7A, COX7B, COX7C, COX8 and NDUFA4, which are encoded in the nuclear genome. The complex exists as a monomer or a dimer and forms supercomplexes (SCs) in the inner mitochondrial membrane with NADH-ubiquinone oxidoreductase (complex I, CI) and ubiquinol-cytochrome c oxidoreductase (cytochrome b-c1 complex, complex III, CIII), resulting in different assemblies (supercomplex SCI(1)III(2)IV(1) and megacomplex MCI(2)III(2)IV(2)) (By similarity). As a newly synthesized protein, rapidly incorporates into a multi-subunit assembly intermediate in the inner membrane, called MITRAC (mitochondrial translation regulation assembly intermediate of cytochrome c oxidase) complex, whose core components are COA3/MITRAC12 and COX14. Within the MITRAC complex, interacts with COA3 and with SMIM20/MITRAC7; the interaction with SMIM20 stabilizes the newly synthesized MT-CO1 and prevents its premature turnover. Interacts with TMEM177 in a COX20-dependent manner (By similarity).</text>
</comment>
<comment type="subcellular location">
    <subcellularLocation>
        <location evidence="2">Mitochondrion inner membrane</location>
        <topology evidence="2">Multi-pass membrane protein</topology>
    </subcellularLocation>
</comment>
<comment type="similarity">
    <text evidence="4">Belongs to the heme-copper respiratory oxidase family.</text>
</comment>
<gene>
    <name type="primary">MT-CO1</name>
    <name type="synonym">COI</name>
    <name type="synonym">COXI</name>
    <name type="synonym">MTCO1</name>
</gene>
<reference key="1">
    <citation type="book" date="1997" name="Avian molecular evolution and systematics">
        <title>Phylogenetic relationships of the ratite birds: resolving conflicts between molecular and morphological data sets.</title>
        <editorList>
            <person name="Mindell D.P."/>
        </editorList>
        <authorList>
            <person name="Lee K."/>
            <person name="Feinstein J."/>
            <person name="Cracraft J."/>
        </authorList>
    </citation>
    <scope>NUCLEOTIDE SEQUENCE [GENOMIC DNA]</scope>
</reference>
<organism>
    <name type="scientific">Dromaius novaehollandiae</name>
    <name type="common">Emu</name>
    <dbReference type="NCBI Taxonomy" id="8790"/>
    <lineage>
        <taxon>Eukaryota</taxon>
        <taxon>Metazoa</taxon>
        <taxon>Chordata</taxon>
        <taxon>Craniata</taxon>
        <taxon>Vertebrata</taxon>
        <taxon>Euteleostomi</taxon>
        <taxon>Archelosauria</taxon>
        <taxon>Archosauria</taxon>
        <taxon>Dinosauria</taxon>
        <taxon>Saurischia</taxon>
        <taxon>Theropoda</taxon>
        <taxon>Coelurosauria</taxon>
        <taxon>Aves</taxon>
        <taxon>Palaeognathae</taxon>
        <taxon>Casuariiformes</taxon>
        <taxon>Dromaiidae</taxon>
        <taxon>Dromaius</taxon>
    </lineage>
</organism>